<sequence length="432" mass="47345">MGNNVVVLGTQWGDEGKGKIVDLLTERAKYVVRYQGGHNAGHTLVINGEKTVLHLIPSGILRENVTSIIGNGVVLSPAALMKEMKELEDRGIPVRERLLLSEACPLILDYHVALDNAREKARGAKAIGTTGRGIGPAYEDKVARRGLRVGDLFDKETFAEKLKEVMEYHNFQLVNYYKAEAVDYQKVLDDTMAVADILTSMVVDVSDLLDQARQRGDFVMFEGAQGTLLDIDHGTYPYVTSSNTTAGGVATGSGLGPRYVDYVLGILKAYSTRVGAGPFPTELFDETGEFLCKQGNEFGATTGRRRRTGWLDTVAVRRAVQLNSLSGFCLTKLDVLDGLKEVKLCVAYRMPDGREVTTTPLAADDWKGVEPIYETMPGWSESTFGVKDRSGLPQAALNYIKRIEELTGVPIDIISTGPDRTETMILRDPFDA</sequence>
<reference key="1">
    <citation type="journal article" date="2006" name="Proc. Natl. Acad. Sci. U.S.A.">
        <title>Identification of genes subject to positive selection in uropathogenic strains of Escherichia coli: a comparative genomics approach.</title>
        <authorList>
            <person name="Chen S.L."/>
            <person name="Hung C.-S."/>
            <person name="Xu J."/>
            <person name="Reigstad C.S."/>
            <person name="Magrini V."/>
            <person name="Sabo A."/>
            <person name="Blasiar D."/>
            <person name="Bieri T."/>
            <person name="Meyer R.R."/>
            <person name="Ozersky P."/>
            <person name="Armstrong J.R."/>
            <person name="Fulton R.S."/>
            <person name="Latreille J.P."/>
            <person name="Spieth J."/>
            <person name="Hooton T.M."/>
            <person name="Mardis E.R."/>
            <person name="Hultgren S.J."/>
            <person name="Gordon J.I."/>
        </authorList>
    </citation>
    <scope>NUCLEOTIDE SEQUENCE [LARGE SCALE GENOMIC DNA]</scope>
    <source>
        <strain>UTI89 / UPEC</strain>
    </source>
</reference>
<comment type="function">
    <text evidence="1">Plays an important role in the de novo pathway of purine nucleotide biosynthesis. Catalyzes the first committed step in the biosynthesis of AMP from IMP.</text>
</comment>
<comment type="catalytic activity">
    <reaction evidence="1">
        <text>IMP + L-aspartate + GTP = N(6)-(1,2-dicarboxyethyl)-AMP + GDP + phosphate + 2 H(+)</text>
        <dbReference type="Rhea" id="RHEA:15753"/>
        <dbReference type="ChEBI" id="CHEBI:15378"/>
        <dbReference type="ChEBI" id="CHEBI:29991"/>
        <dbReference type="ChEBI" id="CHEBI:37565"/>
        <dbReference type="ChEBI" id="CHEBI:43474"/>
        <dbReference type="ChEBI" id="CHEBI:57567"/>
        <dbReference type="ChEBI" id="CHEBI:58053"/>
        <dbReference type="ChEBI" id="CHEBI:58189"/>
        <dbReference type="EC" id="6.3.4.4"/>
    </reaction>
</comment>
<comment type="cofactor">
    <cofactor evidence="1">
        <name>Mg(2+)</name>
        <dbReference type="ChEBI" id="CHEBI:18420"/>
    </cofactor>
    <text evidence="1">Binds 1 Mg(2+) ion per subunit.</text>
</comment>
<comment type="pathway">
    <text evidence="1">Purine metabolism; AMP biosynthesis via de novo pathway; AMP from IMP: step 1/2.</text>
</comment>
<comment type="subunit">
    <text evidence="1">Homodimer.</text>
</comment>
<comment type="subcellular location">
    <subcellularLocation>
        <location evidence="1">Cytoplasm</location>
    </subcellularLocation>
</comment>
<comment type="similarity">
    <text evidence="1">Belongs to the adenylosuccinate synthetase family.</text>
</comment>
<accession>Q1R383</accession>
<dbReference type="EC" id="6.3.4.4" evidence="1"/>
<dbReference type="EMBL" id="CP000243">
    <property type="protein sequence ID" value="ABE10181.1"/>
    <property type="molecule type" value="Genomic_DNA"/>
</dbReference>
<dbReference type="RefSeq" id="WP_000527955.1">
    <property type="nucleotide sequence ID" value="NZ_CP064825.1"/>
</dbReference>
<dbReference type="SMR" id="Q1R383"/>
<dbReference type="GeneID" id="75202411"/>
<dbReference type="KEGG" id="eci:UTI89_C4777"/>
<dbReference type="HOGENOM" id="CLU_029848_0_0_6"/>
<dbReference type="UniPathway" id="UPA00075">
    <property type="reaction ID" value="UER00335"/>
</dbReference>
<dbReference type="Proteomes" id="UP000001952">
    <property type="component" value="Chromosome"/>
</dbReference>
<dbReference type="GO" id="GO:0005737">
    <property type="term" value="C:cytoplasm"/>
    <property type="evidence" value="ECO:0007669"/>
    <property type="project" value="UniProtKB-SubCell"/>
</dbReference>
<dbReference type="GO" id="GO:0004019">
    <property type="term" value="F:adenylosuccinate synthase activity"/>
    <property type="evidence" value="ECO:0007669"/>
    <property type="project" value="UniProtKB-UniRule"/>
</dbReference>
<dbReference type="GO" id="GO:0005525">
    <property type="term" value="F:GTP binding"/>
    <property type="evidence" value="ECO:0007669"/>
    <property type="project" value="UniProtKB-UniRule"/>
</dbReference>
<dbReference type="GO" id="GO:0000287">
    <property type="term" value="F:magnesium ion binding"/>
    <property type="evidence" value="ECO:0007669"/>
    <property type="project" value="UniProtKB-UniRule"/>
</dbReference>
<dbReference type="GO" id="GO:0044208">
    <property type="term" value="P:'de novo' AMP biosynthetic process"/>
    <property type="evidence" value="ECO:0007669"/>
    <property type="project" value="UniProtKB-UniRule"/>
</dbReference>
<dbReference type="GO" id="GO:0046040">
    <property type="term" value="P:IMP metabolic process"/>
    <property type="evidence" value="ECO:0007669"/>
    <property type="project" value="TreeGrafter"/>
</dbReference>
<dbReference type="CDD" id="cd03108">
    <property type="entry name" value="AdSS"/>
    <property type="match status" value="1"/>
</dbReference>
<dbReference type="FunFam" id="1.10.300.10:FF:000001">
    <property type="entry name" value="Adenylosuccinate synthetase"/>
    <property type="match status" value="1"/>
</dbReference>
<dbReference type="FunFam" id="3.90.170.10:FF:000001">
    <property type="entry name" value="Adenylosuccinate synthetase"/>
    <property type="match status" value="1"/>
</dbReference>
<dbReference type="Gene3D" id="3.40.440.10">
    <property type="entry name" value="Adenylosuccinate Synthetase, subunit A, domain 1"/>
    <property type="match status" value="1"/>
</dbReference>
<dbReference type="Gene3D" id="1.10.300.10">
    <property type="entry name" value="Adenylosuccinate Synthetase, subunit A, domain 2"/>
    <property type="match status" value="1"/>
</dbReference>
<dbReference type="Gene3D" id="3.90.170.10">
    <property type="entry name" value="Adenylosuccinate Synthetase, subunit A, domain 3"/>
    <property type="match status" value="1"/>
</dbReference>
<dbReference type="HAMAP" id="MF_00011">
    <property type="entry name" value="Adenylosucc_synth"/>
    <property type="match status" value="1"/>
</dbReference>
<dbReference type="InterPro" id="IPR018220">
    <property type="entry name" value="Adenylosuccin_syn_GTP-bd"/>
</dbReference>
<dbReference type="InterPro" id="IPR033128">
    <property type="entry name" value="Adenylosuccin_syn_Lys_AS"/>
</dbReference>
<dbReference type="InterPro" id="IPR042109">
    <property type="entry name" value="Adenylosuccinate_synth_dom1"/>
</dbReference>
<dbReference type="InterPro" id="IPR042110">
    <property type="entry name" value="Adenylosuccinate_synth_dom2"/>
</dbReference>
<dbReference type="InterPro" id="IPR042111">
    <property type="entry name" value="Adenylosuccinate_synth_dom3"/>
</dbReference>
<dbReference type="InterPro" id="IPR001114">
    <property type="entry name" value="Adenylosuccinate_synthetase"/>
</dbReference>
<dbReference type="InterPro" id="IPR027417">
    <property type="entry name" value="P-loop_NTPase"/>
</dbReference>
<dbReference type="NCBIfam" id="NF002223">
    <property type="entry name" value="PRK01117.1"/>
    <property type="match status" value="1"/>
</dbReference>
<dbReference type="NCBIfam" id="TIGR00184">
    <property type="entry name" value="purA"/>
    <property type="match status" value="1"/>
</dbReference>
<dbReference type="PANTHER" id="PTHR11846">
    <property type="entry name" value="ADENYLOSUCCINATE SYNTHETASE"/>
    <property type="match status" value="1"/>
</dbReference>
<dbReference type="PANTHER" id="PTHR11846:SF0">
    <property type="entry name" value="ADENYLOSUCCINATE SYNTHETASE"/>
    <property type="match status" value="1"/>
</dbReference>
<dbReference type="Pfam" id="PF00709">
    <property type="entry name" value="Adenylsucc_synt"/>
    <property type="match status" value="1"/>
</dbReference>
<dbReference type="SMART" id="SM00788">
    <property type="entry name" value="Adenylsucc_synt"/>
    <property type="match status" value="1"/>
</dbReference>
<dbReference type="SUPFAM" id="SSF52540">
    <property type="entry name" value="P-loop containing nucleoside triphosphate hydrolases"/>
    <property type="match status" value="1"/>
</dbReference>
<dbReference type="PROSITE" id="PS01266">
    <property type="entry name" value="ADENYLOSUCCIN_SYN_1"/>
    <property type="match status" value="1"/>
</dbReference>
<dbReference type="PROSITE" id="PS00513">
    <property type="entry name" value="ADENYLOSUCCIN_SYN_2"/>
    <property type="match status" value="1"/>
</dbReference>
<gene>
    <name evidence="1" type="primary">purA</name>
    <name type="ordered locus">UTI89_C4777</name>
</gene>
<keyword id="KW-0963">Cytoplasm</keyword>
<keyword id="KW-0342">GTP-binding</keyword>
<keyword id="KW-0436">Ligase</keyword>
<keyword id="KW-0460">Magnesium</keyword>
<keyword id="KW-0479">Metal-binding</keyword>
<keyword id="KW-0547">Nucleotide-binding</keyword>
<keyword id="KW-0658">Purine biosynthesis</keyword>
<evidence type="ECO:0000255" key="1">
    <source>
        <dbReference type="HAMAP-Rule" id="MF_00011"/>
    </source>
</evidence>
<protein>
    <recommendedName>
        <fullName evidence="1">Adenylosuccinate synthetase</fullName>
        <shortName evidence="1">AMPSase</shortName>
        <shortName evidence="1">AdSS</shortName>
        <ecNumber evidence="1">6.3.4.4</ecNumber>
    </recommendedName>
    <alternativeName>
        <fullName evidence="1">IMP--aspartate ligase</fullName>
    </alternativeName>
</protein>
<proteinExistence type="inferred from homology"/>
<name>PURA_ECOUT</name>
<organism>
    <name type="scientific">Escherichia coli (strain UTI89 / UPEC)</name>
    <dbReference type="NCBI Taxonomy" id="364106"/>
    <lineage>
        <taxon>Bacteria</taxon>
        <taxon>Pseudomonadati</taxon>
        <taxon>Pseudomonadota</taxon>
        <taxon>Gammaproteobacteria</taxon>
        <taxon>Enterobacterales</taxon>
        <taxon>Enterobacteriaceae</taxon>
        <taxon>Escherichia</taxon>
    </lineage>
</organism>
<feature type="chain" id="PRO_1000000815" description="Adenylosuccinate synthetase">
    <location>
        <begin position="1"/>
        <end position="432"/>
    </location>
</feature>
<feature type="active site" description="Proton acceptor" evidence="1">
    <location>
        <position position="14"/>
    </location>
</feature>
<feature type="active site" description="Proton donor" evidence="1">
    <location>
        <position position="42"/>
    </location>
</feature>
<feature type="binding site" evidence="1">
    <location>
        <begin position="13"/>
        <end position="19"/>
    </location>
    <ligand>
        <name>GTP</name>
        <dbReference type="ChEBI" id="CHEBI:37565"/>
    </ligand>
</feature>
<feature type="binding site" description="in other chain" evidence="1">
    <location>
        <begin position="14"/>
        <end position="17"/>
    </location>
    <ligand>
        <name>IMP</name>
        <dbReference type="ChEBI" id="CHEBI:58053"/>
        <note>ligand shared between dimeric partners</note>
    </ligand>
</feature>
<feature type="binding site" evidence="1">
    <location>
        <position position="14"/>
    </location>
    <ligand>
        <name>Mg(2+)</name>
        <dbReference type="ChEBI" id="CHEBI:18420"/>
    </ligand>
</feature>
<feature type="binding site" description="in other chain" evidence="1">
    <location>
        <begin position="39"/>
        <end position="42"/>
    </location>
    <ligand>
        <name>IMP</name>
        <dbReference type="ChEBI" id="CHEBI:58053"/>
        <note>ligand shared between dimeric partners</note>
    </ligand>
</feature>
<feature type="binding site" evidence="1">
    <location>
        <begin position="41"/>
        <end position="43"/>
    </location>
    <ligand>
        <name>GTP</name>
        <dbReference type="ChEBI" id="CHEBI:37565"/>
    </ligand>
</feature>
<feature type="binding site" evidence="1">
    <location>
        <position position="41"/>
    </location>
    <ligand>
        <name>Mg(2+)</name>
        <dbReference type="ChEBI" id="CHEBI:18420"/>
    </ligand>
</feature>
<feature type="binding site" description="in other chain" evidence="1">
    <location>
        <position position="130"/>
    </location>
    <ligand>
        <name>IMP</name>
        <dbReference type="ChEBI" id="CHEBI:58053"/>
        <note>ligand shared between dimeric partners</note>
    </ligand>
</feature>
<feature type="binding site" evidence="1">
    <location>
        <position position="144"/>
    </location>
    <ligand>
        <name>IMP</name>
        <dbReference type="ChEBI" id="CHEBI:58053"/>
        <note>ligand shared between dimeric partners</note>
    </ligand>
</feature>
<feature type="binding site" description="in other chain" evidence="1">
    <location>
        <position position="225"/>
    </location>
    <ligand>
        <name>IMP</name>
        <dbReference type="ChEBI" id="CHEBI:58053"/>
        <note>ligand shared between dimeric partners</note>
    </ligand>
</feature>
<feature type="binding site" description="in other chain" evidence="1">
    <location>
        <position position="240"/>
    </location>
    <ligand>
        <name>IMP</name>
        <dbReference type="ChEBI" id="CHEBI:58053"/>
        <note>ligand shared between dimeric partners</note>
    </ligand>
</feature>
<feature type="binding site" evidence="1">
    <location>
        <begin position="300"/>
        <end position="306"/>
    </location>
    <ligand>
        <name>substrate</name>
    </ligand>
</feature>
<feature type="binding site" description="in other chain" evidence="1">
    <location>
        <position position="304"/>
    </location>
    <ligand>
        <name>IMP</name>
        <dbReference type="ChEBI" id="CHEBI:58053"/>
        <note>ligand shared between dimeric partners</note>
    </ligand>
</feature>
<feature type="binding site" evidence="1">
    <location>
        <position position="306"/>
    </location>
    <ligand>
        <name>GTP</name>
        <dbReference type="ChEBI" id="CHEBI:37565"/>
    </ligand>
</feature>
<feature type="binding site" evidence="1">
    <location>
        <begin position="332"/>
        <end position="334"/>
    </location>
    <ligand>
        <name>GTP</name>
        <dbReference type="ChEBI" id="CHEBI:37565"/>
    </ligand>
</feature>
<feature type="binding site" evidence="1">
    <location>
        <begin position="415"/>
        <end position="417"/>
    </location>
    <ligand>
        <name>GTP</name>
        <dbReference type="ChEBI" id="CHEBI:37565"/>
    </ligand>
</feature>